<accession>Q5QUF4</accession>
<gene>
    <name evidence="1" type="primary">dxr</name>
    <name type="ordered locus">IL0839</name>
</gene>
<sequence length="397" mass="42832">MRRITVLGATGSIGQNTLNVVSRHPDDFQVFALTAHSQISAMAELCVKHNPQYAVMGSYNAAAELKALLGQQTSTQVMYGDQALAEVSSDAEVDVVMAAIVGAAGLSPTLAAIDAGKDVLLANKEALVMSGQLFIDHAQRSGARIIPVDSEHNAIFQCLPQAAQQQVGTMALAEHGIQYLLLTGSGGPFRDIPLEELPQQTPGAACNHPNWSMGRKISVDSATMLNKGLEYIEARWLFNCSRDQLKVVIHPQSVIHSMVQYTDGSVLAQMGEPDMRTPIAHSLGYPERLESGVAGLDFTQIAELTFKQPEAQRYPCLQLAIEACWEGQWATTALNAANEVAVAAFLQEQVGFTDIAKVCDSVLQSIQADEADSLETLLAIDKQARLAANKWLQEYAQ</sequence>
<organism>
    <name type="scientific">Idiomarina loihiensis (strain ATCC BAA-735 / DSM 15497 / L2-TR)</name>
    <dbReference type="NCBI Taxonomy" id="283942"/>
    <lineage>
        <taxon>Bacteria</taxon>
        <taxon>Pseudomonadati</taxon>
        <taxon>Pseudomonadota</taxon>
        <taxon>Gammaproteobacteria</taxon>
        <taxon>Alteromonadales</taxon>
        <taxon>Idiomarinaceae</taxon>
        <taxon>Idiomarina</taxon>
    </lineage>
</organism>
<dbReference type="EC" id="1.1.1.267" evidence="1"/>
<dbReference type="EMBL" id="AE017340">
    <property type="protein sequence ID" value="AAV81679.1"/>
    <property type="molecule type" value="Genomic_DNA"/>
</dbReference>
<dbReference type="SMR" id="Q5QUF4"/>
<dbReference type="STRING" id="283942.IL0839"/>
<dbReference type="GeneID" id="41335995"/>
<dbReference type="KEGG" id="ilo:IL0839"/>
<dbReference type="eggNOG" id="COG0743">
    <property type="taxonomic scope" value="Bacteria"/>
</dbReference>
<dbReference type="HOGENOM" id="CLU_035714_4_0_6"/>
<dbReference type="OrthoDB" id="9806546at2"/>
<dbReference type="UniPathway" id="UPA00056">
    <property type="reaction ID" value="UER00092"/>
</dbReference>
<dbReference type="Proteomes" id="UP000001171">
    <property type="component" value="Chromosome"/>
</dbReference>
<dbReference type="GO" id="GO:0030604">
    <property type="term" value="F:1-deoxy-D-xylulose-5-phosphate reductoisomerase activity"/>
    <property type="evidence" value="ECO:0007669"/>
    <property type="project" value="UniProtKB-UniRule"/>
</dbReference>
<dbReference type="GO" id="GO:0030145">
    <property type="term" value="F:manganese ion binding"/>
    <property type="evidence" value="ECO:0007669"/>
    <property type="project" value="TreeGrafter"/>
</dbReference>
<dbReference type="GO" id="GO:0070402">
    <property type="term" value="F:NADPH binding"/>
    <property type="evidence" value="ECO:0007669"/>
    <property type="project" value="InterPro"/>
</dbReference>
<dbReference type="GO" id="GO:0051484">
    <property type="term" value="P:isopentenyl diphosphate biosynthetic process, methylerythritol 4-phosphate pathway involved in terpenoid biosynthetic process"/>
    <property type="evidence" value="ECO:0007669"/>
    <property type="project" value="TreeGrafter"/>
</dbReference>
<dbReference type="FunFam" id="1.10.1740.10:FF:000004">
    <property type="entry name" value="1-deoxy-D-xylulose 5-phosphate reductoisomerase"/>
    <property type="match status" value="1"/>
</dbReference>
<dbReference type="FunFam" id="3.40.50.720:FF:000045">
    <property type="entry name" value="1-deoxy-D-xylulose 5-phosphate reductoisomerase"/>
    <property type="match status" value="1"/>
</dbReference>
<dbReference type="Gene3D" id="1.10.1740.10">
    <property type="match status" value="1"/>
</dbReference>
<dbReference type="Gene3D" id="3.40.50.720">
    <property type="entry name" value="NAD(P)-binding Rossmann-like Domain"/>
    <property type="match status" value="1"/>
</dbReference>
<dbReference type="HAMAP" id="MF_00183">
    <property type="entry name" value="DXP_reductoisom"/>
    <property type="match status" value="1"/>
</dbReference>
<dbReference type="InterPro" id="IPR003821">
    <property type="entry name" value="DXP_reductoisomerase"/>
</dbReference>
<dbReference type="InterPro" id="IPR013644">
    <property type="entry name" value="DXP_reductoisomerase_C"/>
</dbReference>
<dbReference type="InterPro" id="IPR013512">
    <property type="entry name" value="DXP_reductoisomerase_N"/>
</dbReference>
<dbReference type="InterPro" id="IPR026877">
    <property type="entry name" value="DXPR_C"/>
</dbReference>
<dbReference type="InterPro" id="IPR036169">
    <property type="entry name" value="DXPR_C_sf"/>
</dbReference>
<dbReference type="InterPro" id="IPR036291">
    <property type="entry name" value="NAD(P)-bd_dom_sf"/>
</dbReference>
<dbReference type="NCBIfam" id="TIGR00243">
    <property type="entry name" value="Dxr"/>
    <property type="match status" value="1"/>
</dbReference>
<dbReference type="NCBIfam" id="NF003938">
    <property type="entry name" value="PRK05447.1-1"/>
    <property type="match status" value="1"/>
</dbReference>
<dbReference type="NCBIfam" id="NF009114">
    <property type="entry name" value="PRK12464.1"/>
    <property type="match status" value="1"/>
</dbReference>
<dbReference type="PANTHER" id="PTHR30525">
    <property type="entry name" value="1-DEOXY-D-XYLULOSE 5-PHOSPHATE REDUCTOISOMERASE"/>
    <property type="match status" value="1"/>
</dbReference>
<dbReference type="PANTHER" id="PTHR30525:SF0">
    <property type="entry name" value="1-DEOXY-D-XYLULOSE 5-PHOSPHATE REDUCTOISOMERASE, CHLOROPLASTIC"/>
    <property type="match status" value="1"/>
</dbReference>
<dbReference type="Pfam" id="PF08436">
    <property type="entry name" value="DXP_redisom_C"/>
    <property type="match status" value="1"/>
</dbReference>
<dbReference type="Pfam" id="PF02670">
    <property type="entry name" value="DXP_reductoisom"/>
    <property type="match status" value="1"/>
</dbReference>
<dbReference type="Pfam" id="PF13288">
    <property type="entry name" value="DXPR_C"/>
    <property type="match status" value="1"/>
</dbReference>
<dbReference type="PIRSF" id="PIRSF006205">
    <property type="entry name" value="Dxp_reductismrs"/>
    <property type="match status" value="1"/>
</dbReference>
<dbReference type="SUPFAM" id="SSF69055">
    <property type="entry name" value="1-deoxy-D-xylulose-5-phosphate reductoisomerase, C-terminal domain"/>
    <property type="match status" value="1"/>
</dbReference>
<dbReference type="SUPFAM" id="SSF55347">
    <property type="entry name" value="Glyceraldehyde-3-phosphate dehydrogenase-like, C-terminal domain"/>
    <property type="match status" value="1"/>
</dbReference>
<dbReference type="SUPFAM" id="SSF51735">
    <property type="entry name" value="NAD(P)-binding Rossmann-fold domains"/>
    <property type="match status" value="1"/>
</dbReference>
<keyword id="KW-0414">Isoprene biosynthesis</keyword>
<keyword id="KW-0464">Manganese</keyword>
<keyword id="KW-0479">Metal-binding</keyword>
<keyword id="KW-0521">NADP</keyword>
<keyword id="KW-0560">Oxidoreductase</keyword>
<keyword id="KW-1185">Reference proteome</keyword>
<feature type="chain" id="PRO_0000163665" description="1-deoxy-D-xylulose 5-phosphate reductoisomerase">
    <location>
        <begin position="1"/>
        <end position="397"/>
    </location>
</feature>
<feature type="binding site" evidence="1">
    <location>
        <position position="10"/>
    </location>
    <ligand>
        <name>NADPH</name>
        <dbReference type="ChEBI" id="CHEBI:57783"/>
    </ligand>
</feature>
<feature type="binding site" evidence="1">
    <location>
        <position position="11"/>
    </location>
    <ligand>
        <name>NADPH</name>
        <dbReference type="ChEBI" id="CHEBI:57783"/>
    </ligand>
</feature>
<feature type="binding site" evidence="1">
    <location>
        <position position="12"/>
    </location>
    <ligand>
        <name>NADPH</name>
        <dbReference type="ChEBI" id="CHEBI:57783"/>
    </ligand>
</feature>
<feature type="binding site" evidence="1">
    <location>
        <position position="13"/>
    </location>
    <ligand>
        <name>NADPH</name>
        <dbReference type="ChEBI" id="CHEBI:57783"/>
    </ligand>
</feature>
<feature type="binding site" evidence="1">
    <location>
        <position position="38"/>
    </location>
    <ligand>
        <name>NADPH</name>
        <dbReference type="ChEBI" id="CHEBI:57783"/>
    </ligand>
</feature>
<feature type="binding site" evidence="1">
    <location>
        <position position="123"/>
    </location>
    <ligand>
        <name>NADPH</name>
        <dbReference type="ChEBI" id="CHEBI:57783"/>
    </ligand>
</feature>
<feature type="binding site" evidence="1">
    <location>
        <position position="124"/>
    </location>
    <ligand>
        <name>1-deoxy-D-xylulose 5-phosphate</name>
        <dbReference type="ChEBI" id="CHEBI:57792"/>
    </ligand>
</feature>
<feature type="binding site" evidence="1">
    <location>
        <position position="125"/>
    </location>
    <ligand>
        <name>NADPH</name>
        <dbReference type="ChEBI" id="CHEBI:57783"/>
    </ligand>
</feature>
<feature type="binding site" evidence="1">
    <location>
        <position position="149"/>
    </location>
    <ligand>
        <name>Mn(2+)</name>
        <dbReference type="ChEBI" id="CHEBI:29035"/>
    </ligand>
</feature>
<feature type="binding site" evidence="1">
    <location>
        <position position="150"/>
    </location>
    <ligand>
        <name>1-deoxy-D-xylulose 5-phosphate</name>
        <dbReference type="ChEBI" id="CHEBI:57792"/>
    </ligand>
</feature>
<feature type="binding site" evidence="1">
    <location>
        <position position="151"/>
    </location>
    <ligand>
        <name>1-deoxy-D-xylulose 5-phosphate</name>
        <dbReference type="ChEBI" id="CHEBI:57792"/>
    </ligand>
</feature>
<feature type="binding site" evidence="1">
    <location>
        <position position="151"/>
    </location>
    <ligand>
        <name>Mn(2+)</name>
        <dbReference type="ChEBI" id="CHEBI:29035"/>
    </ligand>
</feature>
<feature type="binding site" evidence="1">
    <location>
        <position position="185"/>
    </location>
    <ligand>
        <name>1-deoxy-D-xylulose 5-phosphate</name>
        <dbReference type="ChEBI" id="CHEBI:57792"/>
    </ligand>
</feature>
<feature type="binding site" evidence="1">
    <location>
        <position position="208"/>
    </location>
    <ligand>
        <name>1-deoxy-D-xylulose 5-phosphate</name>
        <dbReference type="ChEBI" id="CHEBI:57792"/>
    </ligand>
</feature>
<feature type="binding site" evidence="1">
    <location>
        <position position="214"/>
    </location>
    <ligand>
        <name>NADPH</name>
        <dbReference type="ChEBI" id="CHEBI:57783"/>
    </ligand>
</feature>
<feature type="binding site" evidence="1">
    <location>
        <position position="221"/>
    </location>
    <ligand>
        <name>1-deoxy-D-xylulose 5-phosphate</name>
        <dbReference type="ChEBI" id="CHEBI:57792"/>
    </ligand>
</feature>
<feature type="binding site" evidence="1">
    <location>
        <position position="226"/>
    </location>
    <ligand>
        <name>1-deoxy-D-xylulose 5-phosphate</name>
        <dbReference type="ChEBI" id="CHEBI:57792"/>
    </ligand>
</feature>
<feature type="binding site" evidence="1">
    <location>
        <position position="227"/>
    </location>
    <ligand>
        <name>1-deoxy-D-xylulose 5-phosphate</name>
        <dbReference type="ChEBI" id="CHEBI:57792"/>
    </ligand>
</feature>
<feature type="binding site" evidence="1">
    <location>
        <position position="230"/>
    </location>
    <ligand>
        <name>1-deoxy-D-xylulose 5-phosphate</name>
        <dbReference type="ChEBI" id="CHEBI:57792"/>
    </ligand>
</feature>
<feature type="binding site" evidence="1">
    <location>
        <position position="230"/>
    </location>
    <ligand>
        <name>Mn(2+)</name>
        <dbReference type="ChEBI" id="CHEBI:29035"/>
    </ligand>
</feature>
<protein>
    <recommendedName>
        <fullName evidence="1">1-deoxy-D-xylulose 5-phosphate reductoisomerase</fullName>
        <shortName evidence="1">DXP reductoisomerase</shortName>
        <ecNumber evidence="1">1.1.1.267</ecNumber>
    </recommendedName>
    <alternativeName>
        <fullName evidence="1">1-deoxyxylulose-5-phosphate reductoisomerase</fullName>
    </alternativeName>
    <alternativeName>
        <fullName evidence="1">2-C-methyl-D-erythritol 4-phosphate synthase</fullName>
    </alternativeName>
</protein>
<proteinExistence type="inferred from homology"/>
<comment type="function">
    <text evidence="1">Catalyzes the NADPH-dependent rearrangement and reduction of 1-deoxy-D-xylulose-5-phosphate (DXP) to 2-C-methyl-D-erythritol 4-phosphate (MEP).</text>
</comment>
<comment type="catalytic activity">
    <reaction evidence="1">
        <text>2-C-methyl-D-erythritol 4-phosphate + NADP(+) = 1-deoxy-D-xylulose 5-phosphate + NADPH + H(+)</text>
        <dbReference type="Rhea" id="RHEA:13717"/>
        <dbReference type="ChEBI" id="CHEBI:15378"/>
        <dbReference type="ChEBI" id="CHEBI:57783"/>
        <dbReference type="ChEBI" id="CHEBI:57792"/>
        <dbReference type="ChEBI" id="CHEBI:58262"/>
        <dbReference type="ChEBI" id="CHEBI:58349"/>
        <dbReference type="EC" id="1.1.1.267"/>
    </reaction>
    <physiologicalReaction direction="right-to-left" evidence="1">
        <dbReference type="Rhea" id="RHEA:13719"/>
    </physiologicalReaction>
</comment>
<comment type="cofactor">
    <cofactor evidence="1">
        <name>Mg(2+)</name>
        <dbReference type="ChEBI" id="CHEBI:18420"/>
    </cofactor>
    <cofactor evidence="1">
        <name>Mn(2+)</name>
        <dbReference type="ChEBI" id="CHEBI:29035"/>
    </cofactor>
</comment>
<comment type="pathway">
    <text evidence="1">Isoprenoid biosynthesis; isopentenyl diphosphate biosynthesis via DXP pathway; isopentenyl diphosphate from 1-deoxy-D-xylulose 5-phosphate: step 1/6.</text>
</comment>
<comment type="similarity">
    <text evidence="1">Belongs to the DXR family.</text>
</comment>
<evidence type="ECO:0000255" key="1">
    <source>
        <dbReference type="HAMAP-Rule" id="MF_00183"/>
    </source>
</evidence>
<name>DXR_IDILO</name>
<reference key="1">
    <citation type="journal article" date="2004" name="Proc. Natl. Acad. Sci. U.S.A.">
        <title>Genome sequence of the deep-sea gamma-proteobacterium Idiomarina loihiensis reveals amino acid fermentation as a source of carbon and energy.</title>
        <authorList>
            <person name="Hou S."/>
            <person name="Saw J.H."/>
            <person name="Lee K.S."/>
            <person name="Freitas T.A."/>
            <person name="Belisle C."/>
            <person name="Kawarabayasi Y."/>
            <person name="Donachie S.P."/>
            <person name="Pikina A."/>
            <person name="Galperin M.Y."/>
            <person name="Koonin E.V."/>
            <person name="Makarova K.S."/>
            <person name="Omelchenko M.V."/>
            <person name="Sorokin A."/>
            <person name="Wolf Y.I."/>
            <person name="Li Q.X."/>
            <person name="Keum Y.S."/>
            <person name="Campbell S."/>
            <person name="Denery J."/>
            <person name="Aizawa S."/>
            <person name="Shibata S."/>
            <person name="Malahoff A."/>
            <person name="Alam M."/>
        </authorList>
    </citation>
    <scope>NUCLEOTIDE SEQUENCE [LARGE SCALE GENOMIC DNA]</scope>
    <source>
        <strain>ATCC BAA-735 / DSM 15497 / L2-TR</strain>
    </source>
</reference>